<dbReference type="EC" id="7.1.1.-"/>
<dbReference type="EMBL" id="AM777385">
    <property type="protein sequence ID" value="CAO86023.1"/>
    <property type="molecule type" value="Genomic_DNA"/>
</dbReference>
<dbReference type="RefSeq" id="YP_001531329.1">
    <property type="nucleotide sequence ID" value="NC_009950.1"/>
</dbReference>
<dbReference type="SMR" id="A8Y9D4"/>
<dbReference type="GeneID" id="5696601"/>
<dbReference type="KEGG" id="lper:5696601"/>
<dbReference type="GO" id="GO:0009535">
    <property type="term" value="C:chloroplast thylakoid membrane"/>
    <property type="evidence" value="ECO:0007669"/>
    <property type="project" value="UniProtKB-SubCell"/>
</dbReference>
<dbReference type="GO" id="GO:0008137">
    <property type="term" value="F:NADH dehydrogenase (ubiquinone) activity"/>
    <property type="evidence" value="ECO:0007669"/>
    <property type="project" value="InterPro"/>
</dbReference>
<dbReference type="GO" id="GO:0048038">
    <property type="term" value="F:quinone binding"/>
    <property type="evidence" value="ECO:0007669"/>
    <property type="project" value="UniProtKB-KW"/>
</dbReference>
<dbReference type="GO" id="GO:0042773">
    <property type="term" value="P:ATP synthesis coupled electron transport"/>
    <property type="evidence" value="ECO:0007669"/>
    <property type="project" value="InterPro"/>
</dbReference>
<dbReference type="GO" id="GO:0015990">
    <property type="term" value="P:electron transport coupled proton transport"/>
    <property type="evidence" value="ECO:0007669"/>
    <property type="project" value="TreeGrafter"/>
</dbReference>
<dbReference type="Gene3D" id="1.20.5.2700">
    <property type="match status" value="1"/>
</dbReference>
<dbReference type="InterPro" id="IPR002128">
    <property type="entry name" value="NADH_UbQ_OxRdtase_chlpt_su5_C"/>
</dbReference>
<dbReference type="InterPro" id="IPR018393">
    <property type="entry name" value="NADHpl_OxRdtase_5_subgr"/>
</dbReference>
<dbReference type="InterPro" id="IPR001750">
    <property type="entry name" value="ND/Mrp_TM"/>
</dbReference>
<dbReference type="InterPro" id="IPR003945">
    <property type="entry name" value="NU5C-like"/>
</dbReference>
<dbReference type="InterPro" id="IPR001516">
    <property type="entry name" value="Proton_antipo_N"/>
</dbReference>
<dbReference type="NCBIfam" id="TIGR01974">
    <property type="entry name" value="NDH_I_L"/>
    <property type="match status" value="1"/>
</dbReference>
<dbReference type="NCBIfam" id="NF005141">
    <property type="entry name" value="PRK06590.1"/>
    <property type="match status" value="1"/>
</dbReference>
<dbReference type="PANTHER" id="PTHR42829">
    <property type="entry name" value="NADH-UBIQUINONE OXIDOREDUCTASE CHAIN 5"/>
    <property type="match status" value="1"/>
</dbReference>
<dbReference type="PANTHER" id="PTHR42829:SF2">
    <property type="entry name" value="NADH-UBIQUINONE OXIDOREDUCTASE CHAIN 5"/>
    <property type="match status" value="1"/>
</dbReference>
<dbReference type="Pfam" id="PF01010">
    <property type="entry name" value="Proton_antipo_C"/>
    <property type="match status" value="1"/>
</dbReference>
<dbReference type="Pfam" id="PF00361">
    <property type="entry name" value="Proton_antipo_M"/>
    <property type="match status" value="1"/>
</dbReference>
<dbReference type="Pfam" id="PF00662">
    <property type="entry name" value="Proton_antipo_N"/>
    <property type="match status" value="1"/>
</dbReference>
<dbReference type="PRINTS" id="PR01434">
    <property type="entry name" value="NADHDHGNASE5"/>
</dbReference>
<dbReference type="PRINTS" id="PR01435">
    <property type="entry name" value="NPOXDRDTASE5"/>
</dbReference>
<geneLocation type="chloroplast"/>
<reference key="1">
    <citation type="journal article" date="2008" name="PLoS ONE">
        <title>An optimized chloroplast DNA extraction protocol for grasses (Poaceae) proves suitable for whole plastid genome sequencing and SNP detection.</title>
        <authorList>
            <person name="Diekmann K."/>
            <person name="Hodkinson T.R."/>
            <person name="Fricke E."/>
            <person name="Barth S."/>
        </authorList>
    </citation>
    <scope>NUCLEOTIDE SEQUENCE [LARGE SCALE GENOMIC DNA]</scope>
    <source>
        <strain>cv. Cashel</strain>
    </source>
</reference>
<name>NU5C_LOLPR</name>
<accession>A8Y9D4</accession>
<organism>
    <name type="scientific">Lolium perenne</name>
    <name type="common">Perennial ryegrass</name>
    <dbReference type="NCBI Taxonomy" id="4522"/>
    <lineage>
        <taxon>Eukaryota</taxon>
        <taxon>Viridiplantae</taxon>
        <taxon>Streptophyta</taxon>
        <taxon>Embryophyta</taxon>
        <taxon>Tracheophyta</taxon>
        <taxon>Spermatophyta</taxon>
        <taxon>Magnoliopsida</taxon>
        <taxon>Liliopsida</taxon>
        <taxon>Poales</taxon>
        <taxon>Poaceae</taxon>
        <taxon>BOP clade</taxon>
        <taxon>Pooideae</taxon>
        <taxon>Poodae</taxon>
        <taxon>Poeae</taxon>
        <taxon>Poeae Chloroplast Group 2 (Poeae type)</taxon>
        <taxon>Loliodinae</taxon>
        <taxon>Loliinae</taxon>
        <taxon>Lolium</taxon>
    </lineage>
</organism>
<keyword id="KW-0150">Chloroplast</keyword>
<keyword id="KW-0472">Membrane</keyword>
<keyword id="KW-0520">NAD</keyword>
<keyword id="KW-0521">NADP</keyword>
<keyword id="KW-0934">Plastid</keyword>
<keyword id="KW-0618">Plastoquinone</keyword>
<keyword id="KW-0874">Quinone</keyword>
<keyword id="KW-0793">Thylakoid</keyword>
<keyword id="KW-1278">Translocase</keyword>
<keyword id="KW-0812">Transmembrane</keyword>
<keyword id="KW-1133">Transmembrane helix</keyword>
<keyword id="KW-0813">Transport</keyword>
<feature type="chain" id="PRO_0000360947" description="NAD(P)H-quinone oxidoreductase subunit 5, chloroplastic">
    <location>
        <begin position="1"/>
        <end position="741"/>
    </location>
</feature>
<feature type="transmembrane region" description="Helical" evidence="2">
    <location>
        <begin position="9"/>
        <end position="29"/>
    </location>
</feature>
<feature type="transmembrane region" description="Helical" evidence="2">
    <location>
        <begin position="39"/>
        <end position="59"/>
    </location>
</feature>
<feature type="transmembrane region" description="Helical" evidence="2">
    <location>
        <begin position="89"/>
        <end position="109"/>
    </location>
</feature>
<feature type="transmembrane region" description="Helical" evidence="2">
    <location>
        <begin position="125"/>
        <end position="145"/>
    </location>
</feature>
<feature type="transmembrane region" description="Helical" evidence="2">
    <location>
        <begin position="147"/>
        <end position="167"/>
    </location>
</feature>
<feature type="transmembrane region" description="Helical" evidence="2">
    <location>
        <begin position="185"/>
        <end position="205"/>
    </location>
</feature>
<feature type="transmembrane region" description="Helical" evidence="2">
    <location>
        <begin position="219"/>
        <end position="239"/>
    </location>
</feature>
<feature type="transmembrane region" description="Helical" evidence="2">
    <location>
        <begin position="258"/>
        <end position="278"/>
    </location>
</feature>
<feature type="transmembrane region" description="Helical" evidence="2">
    <location>
        <begin position="280"/>
        <end position="300"/>
    </location>
</feature>
<feature type="transmembrane region" description="Helical" evidence="2">
    <location>
        <begin position="327"/>
        <end position="347"/>
    </location>
</feature>
<feature type="transmembrane region" description="Helical" evidence="2">
    <location>
        <begin position="354"/>
        <end position="374"/>
    </location>
</feature>
<feature type="transmembrane region" description="Helical" evidence="2">
    <location>
        <begin position="396"/>
        <end position="416"/>
    </location>
</feature>
<feature type="transmembrane region" description="Helical" evidence="2">
    <location>
        <begin position="425"/>
        <end position="445"/>
    </location>
</feature>
<feature type="transmembrane region" description="Helical" evidence="2">
    <location>
        <begin position="542"/>
        <end position="562"/>
    </location>
</feature>
<feature type="transmembrane region" description="Helical" evidence="2">
    <location>
        <begin position="605"/>
        <end position="625"/>
    </location>
</feature>
<feature type="transmembrane region" description="Helical" evidence="2">
    <location>
        <begin position="721"/>
        <end position="741"/>
    </location>
</feature>
<gene>
    <name type="primary">ndhF</name>
    <name type="ordered locus">LopeCp102</name>
</gene>
<evidence type="ECO:0000250" key="1"/>
<evidence type="ECO:0000255" key="2"/>
<evidence type="ECO:0000305" key="3"/>
<comment type="function">
    <text evidence="1">NDH shuttles electrons from NAD(P)H:plastoquinone, via FMN and iron-sulfur (Fe-S) centers, to quinones in the photosynthetic chain and possibly in a chloroplast respiratory chain. The immediate electron acceptor for the enzyme in this species is believed to be plastoquinone. Couples the redox reaction to proton translocation, and thus conserves the redox energy in a proton gradient (By similarity).</text>
</comment>
<comment type="catalytic activity">
    <reaction>
        <text>a plastoquinone + NADH + (n+1) H(+)(in) = a plastoquinol + NAD(+) + n H(+)(out)</text>
        <dbReference type="Rhea" id="RHEA:42608"/>
        <dbReference type="Rhea" id="RHEA-COMP:9561"/>
        <dbReference type="Rhea" id="RHEA-COMP:9562"/>
        <dbReference type="ChEBI" id="CHEBI:15378"/>
        <dbReference type="ChEBI" id="CHEBI:17757"/>
        <dbReference type="ChEBI" id="CHEBI:57540"/>
        <dbReference type="ChEBI" id="CHEBI:57945"/>
        <dbReference type="ChEBI" id="CHEBI:62192"/>
    </reaction>
</comment>
<comment type="catalytic activity">
    <reaction>
        <text>a plastoquinone + NADPH + (n+1) H(+)(in) = a plastoquinol + NADP(+) + n H(+)(out)</text>
        <dbReference type="Rhea" id="RHEA:42612"/>
        <dbReference type="Rhea" id="RHEA-COMP:9561"/>
        <dbReference type="Rhea" id="RHEA-COMP:9562"/>
        <dbReference type="ChEBI" id="CHEBI:15378"/>
        <dbReference type="ChEBI" id="CHEBI:17757"/>
        <dbReference type="ChEBI" id="CHEBI:57783"/>
        <dbReference type="ChEBI" id="CHEBI:58349"/>
        <dbReference type="ChEBI" id="CHEBI:62192"/>
    </reaction>
</comment>
<comment type="subunit">
    <text evidence="1">NDH is composed of at least 16 different subunits, 5 of which are encoded in the nucleus.</text>
</comment>
<comment type="subcellular location">
    <subcellularLocation>
        <location evidence="1">Plastid</location>
        <location evidence="1">Chloroplast thylakoid membrane</location>
        <topology evidence="1">Multi-pass membrane protein</topology>
    </subcellularLocation>
</comment>
<comment type="similarity">
    <text evidence="3">Belongs to the complex I subunit 5 family.</text>
</comment>
<sequence>MEHTYQYAWVIPLLPLPVIMSMGFGLFFIPTATRNLRRIWAFPSVLFLSIAMVFSIQLSIQQINGSSIYQYLWSWTVNNDFSLEFGYLIDPLTSIMLILITTVGILVLIYSDGYMSHDEGYLRFFVYISFFTTSMLGLVTSSNLIQIYFFWELVGMCSYLLIGFWFTRPIAASACQKAFVTNRVGDFGLLLGILGFFWITGSLEFRDLFKIANNWIPNNGINSLLTTLCAFLLFLGAVAKSAQFPLHVWLPDAMEGPTPISALIHAATMVAAGIFLLARLFPLFISLPLIMTLISLVGTITLFLGATLAIAQRDIKRSLAYSTMSQLGYMMLALGIGSYQAALFHLITHAYSKALLFLGSGSIIHSMEPLVGYSPEKSQNMVLMGGLRKYIPITRTTFLWGTLSLCGIPPLACFWSKDEILSNSWLYSPFFGIIASFTAGLTAFYMFRIYLLTFDGYLRVHFQNYSTTKEGYLYSISLWGKKIPKRVNRDFILSTTKNGVAFFSQKRPKMKGNTRNRIGYFSTSFGAKNTFAYPHEMGNTMLFPLLILLLFTLFIGFIGISFDNGAMDNGIAELTLLSKWLTPSINLTQESSNSSINSYEFLTNAISSVSLAIFGLFIAYILYGSPYSFFQNLDLINSFYKESPKKYFFFLDQVKKKIYSWSYNRGYMDIFYTRVFTLGIRRLTELTEFFDKGIIDGITNGVGLVSFCIGEEIKYVGGGRISSYLFFFLCYVSVFLFFFIS</sequence>
<protein>
    <recommendedName>
        <fullName>NAD(P)H-quinone oxidoreductase subunit 5, chloroplastic</fullName>
        <ecNumber>7.1.1.-</ecNumber>
    </recommendedName>
    <alternativeName>
        <fullName>NAD(P)H dehydrogenase subunit 5</fullName>
    </alternativeName>
    <alternativeName>
        <fullName>NADH-plastoquinone oxidoreductase subunit 5</fullName>
    </alternativeName>
</protein>
<proteinExistence type="inferred from homology"/>